<comment type="function">
    <text evidence="2">With S4 and S5 plays an important role in translational accuracy.</text>
</comment>
<comment type="function">
    <text evidence="2">Interacts with and stabilizes bases of the 16S rRNA that are involved in tRNA selection in the A site and with the mRNA backbone. Located at the interface of the 30S and 50S subunits, it traverses the body of the 30S subunit contacting proteins on the other side and probably holding the rRNA structure together. The combined cluster of proteins S8, S12 and S17 appears to hold together the shoulder and platform of the 30S subunit.</text>
</comment>
<comment type="subunit">
    <text evidence="2">Part of the 30S ribosomal subunit. Contacts proteins S8 and S17. May interact with IF1 in the 30S initiation complex.</text>
</comment>
<comment type="similarity">
    <text evidence="2">Belongs to the universal ribosomal protein uS12 family.</text>
</comment>
<feature type="chain" id="PRO_0000238137" description="Small ribosomal subunit protein uS12">
    <location>
        <begin position="1"/>
        <end position="125"/>
    </location>
</feature>
<feature type="region of interest" description="Disordered" evidence="3">
    <location>
        <begin position="1"/>
        <end position="30"/>
    </location>
</feature>
<feature type="region of interest" description="Disordered" evidence="3">
    <location>
        <begin position="103"/>
        <end position="125"/>
    </location>
</feature>
<feature type="compositionally biased region" description="Basic residues" evidence="3">
    <location>
        <begin position="9"/>
        <end position="18"/>
    </location>
</feature>
<feature type="compositionally biased region" description="Basic residues" evidence="3">
    <location>
        <begin position="113"/>
        <end position="125"/>
    </location>
</feature>
<feature type="modified residue" description="3-methylthioaspartic acid" evidence="1">
    <location>
        <position position="89"/>
    </location>
</feature>
<sequence>MPTISQLVRKPRAAKPLKSKVPALGNSPQKRGVCTRVYTTTPKKPNSALRKVARVRLTNGFEVSSYIGGEGHNLQEHSVVLIRGGRVKDLPGVRYHTVRGSLDTAGVKDRKQGRSKYGAKKPKSA</sequence>
<proteinExistence type="inferred from homology"/>
<reference key="1">
    <citation type="submission" date="2005-08" db="EMBL/GenBank/DDBJ databases">
        <title>Complete sequence of chromosome 1 of Nitrosospira multiformis ATCC 25196.</title>
        <authorList>
            <person name="Copeland A."/>
            <person name="Lucas S."/>
            <person name="Lapidus A."/>
            <person name="Barry K."/>
            <person name="Detter J.C."/>
            <person name="Glavina T."/>
            <person name="Hammon N."/>
            <person name="Israni S."/>
            <person name="Pitluck S."/>
            <person name="Chain P."/>
            <person name="Malfatti S."/>
            <person name="Shin M."/>
            <person name="Vergez L."/>
            <person name="Schmutz J."/>
            <person name="Larimer F."/>
            <person name="Land M."/>
            <person name="Hauser L."/>
            <person name="Kyrpides N."/>
            <person name="Lykidis A."/>
            <person name="Richardson P."/>
        </authorList>
    </citation>
    <scope>NUCLEOTIDE SEQUENCE [LARGE SCALE GENOMIC DNA]</scope>
    <source>
        <strain>ATCC 25196 / NCIMB 11849 / C 71</strain>
    </source>
</reference>
<dbReference type="EMBL" id="CP000103">
    <property type="protein sequence ID" value="ABB74069.1"/>
    <property type="molecule type" value="Genomic_DNA"/>
</dbReference>
<dbReference type="RefSeq" id="WP_011380119.1">
    <property type="nucleotide sequence ID" value="NC_007614.1"/>
</dbReference>
<dbReference type="SMR" id="Q2YB02"/>
<dbReference type="STRING" id="323848.Nmul_A0762"/>
<dbReference type="KEGG" id="nmu:Nmul_A0762"/>
<dbReference type="eggNOG" id="COG0048">
    <property type="taxonomic scope" value="Bacteria"/>
</dbReference>
<dbReference type="HOGENOM" id="CLU_104295_1_2_4"/>
<dbReference type="OrthoDB" id="9802366at2"/>
<dbReference type="Proteomes" id="UP000002718">
    <property type="component" value="Chromosome"/>
</dbReference>
<dbReference type="GO" id="GO:0015935">
    <property type="term" value="C:small ribosomal subunit"/>
    <property type="evidence" value="ECO:0007669"/>
    <property type="project" value="InterPro"/>
</dbReference>
<dbReference type="GO" id="GO:0019843">
    <property type="term" value="F:rRNA binding"/>
    <property type="evidence" value="ECO:0007669"/>
    <property type="project" value="UniProtKB-UniRule"/>
</dbReference>
<dbReference type="GO" id="GO:0003735">
    <property type="term" value="F:structural constituent of ribosome"/>
    <property type="evidence" value="ECO:0007669"/>
    <property type="project" value="InterPro"/>
</dbReference>
<dbReference type="GO" id="GO:0000049">
    <property type="term" value="F:tRNA binding"/>
    <property type="evidence" value="ECO:0007669"/>
    <property type="project" value="UniProtKB-UniRule"/>
</dbReference>
<dbReference type="GO" id="GO:0006412">
    <property type="term" value="P:translation"/>
    <property type="evidence" value="ECO:0007669"/>
    <property type="project" value="UniProtKB-UniRule"/>
</dbReference>
<dbReference type="CDD" id="cd03368">
    <property type="entry name" value="Ribosomal_S12"/>
    <property type="match status" value="1"/>
</dbReference>
<dbReference type="FunFam" id="2.40.50.140:FF:000001">
    <property type="entry name" value="30S ribosomal protein S12"/>
    <property type="match status" value="1"/>
</dbReference>
<dbReference type="Gene3D" id="2.40.50.140">
    <property type="entry name" value="Nucleic acid-binding proteins"/>
    <property type="match status" value="1"/>
</dbReference>
<dbReference type="HAMAP" id="MF_00403_B">
    <property type="entry name" value="Ribosomal_uS12_B"/>
    <property type="match status" value="1"/>
</dbReference>
<dbReference type="InterPro" id="IPR012340">
    <property type="entry name" value="NA-bd_OB-fold"/>
</dbReference>
<dbReference type="InterPro" id="IPR006032">
    <property type="entry name" value="Ribosomal_uS12"/>
</dbReference>
<dbReference type="InterPro" id="IPR005679">
    <property type="entry name" value="Ribosomal_uS12_bac"/>
</dbReference>
<dbReference type="NCBIfam" id="TIGR00981">
    <property type="entry name" value="rpsL_bact"/>
    <property type="match status" value="1"/>
</dbReference>
<dbReference type="PANTHER" id="PTHR11652">
    <property type="entry name" value="30S RIBOSOMAL PROTEIN S12 FAMILY MEMBER"/>
    <property type="match status" value="1"/>
</dbReference>
<dbReference type="Pfam" id="PF00164">
    <property type="entry name" value="Ribosom_S12_S23"/>
    <property type="match status" value="1"/>
</dbReference>
<dbReference type="PIRSF" id="PIRSF002133">
    <property type="entry name" value="Ribosomal_S12/S23"/>
    <property type="match status" value="1"/>
</dbReference>
<dbReference type="PRINTS" id="PR01034">
    <property type="entry name" value="RIBOSOMALS12"/>
</dbReference>
<dbReference type="SUPFAM" id="SSF50249">
    <property type="entry name" value="Nucleic acid-binding proteins"/>
    <property type="match status" value="1"/>
</dbReference>
<dbReference type="PROSITE" id="PS00055">
    <property type="entry name" value="RIBOSOMAL_S12"/>
    <property type="match status" value="1"/>
</dbReference>
<organism>
    <name type="scientific">Nitrosospira multiformis (strain ATCC 25196 / NCIMB 11849 / C 71)</name>
    <dbReference type="NCBI Taxonomy" id="323848"/>
    <lineage>
        <taxon>Bacteria</taxon>
        <taxon>Pseudomonadati</taxon>
        <taxon>Pseudomonadota</taxon>
        <taxon>Betaproteobacteria</taxon>
        <taxon>Nitrosomonadales</taxon>
        <taxon>Nitrosomonadaceae</taxon>
        <taxon>Nitrosospira</taxon>
    </lineage>
</organism>
<evidence type="ECO:0000250" key="1"/>
<evidence type="ECO:0000255" key="2">
    <source>
        <dbReference type="HAMAP-Rule" id="MF_00403"/>
    </source>
</evidence>
<evidence type="ECO:0000256" key="3">
    <source>
        <dbReference type="SAM" id="MobiDB-lite"/>
    </source>
</evidence>
<evidence type="ECO:0000305" key="4"/>
<accession>Q2YB02</accession>
<name>RS12_NITMU</name>
<gene>
    <name evidence="2" type="primary">rpsL</name>
    <name type="ordered locus">Nmul_A0762</name>
</gene>
<keyword id="KW-0488">Methylation</keyword>
<keyword id="KW-1185">Reference proteome</keyword>
<keyword id="KW-0687">Ribonucleoprotein</keyword>
<keyword id="KW-0689">Ribosomal protein</keyword>
<keyword id="KW-0694">RNA-binding</keyword>
<keyword id="KW-0699">rRNA-binding</keyword>
<keyword id="KW-0820">tRNA-binding</keyword>
<protein>
    <recommendedName>
        <fullName evidence="2">Small ribosomal subunit protein uS12</fullName>
    </recommendedName>
    <alternativeName>
        <fullName evidence="4">30S ribosomal protein S12</fullName>
    </alternativeName>
</protein>